<reference key="1">
    <citation type="journal article" date="1995" name="Science">
        <title>Whole-genome random sequencing and assembly of Haemophilus influenzae Rd.</title>
        <authorList>
            <person name="Fleischmann R.D."/>
            <person name="Adams M.D."/>
            <person name="White O."/>
            <person name="Clayton R.A."/>
            <person name="Kirkness E.F."/>
            <person name="Kerlavage A.R."/>
            <person name="Bult C.J."/>
            <person name="Tomb J.-F."/>
            <person name="Dougherty B.A."/>
            <person name="Merrick J.M."/>
            <person name="McKenney K."/>
            <person name="Sutton G.G."/>
            <person name="FitzHugh W."/>
            <person name="Fields C.A."/>
            <person name="Gocayne J.D."/>
            <person name="Scott J.D."/>
            <person name="Shirley R."/>
            <person name="Liu L.-I."/>
            <person name="Glodek A."/>
            <person name="Kelley J.M."/>
            <person name="Weidman J.F."/>
            <person name="Phillips C.A."/>
            <person name="Spriggs T."/>
            <person name="Hedblom E."/>
            <person name="Cotton M.D."/>
            <person name="Utterback T.R."/>
            <person name="Hanna M.C."/>
            <person name="Nguyen D.T."/>
            <person name="Saudek D.M."/>
            <person name="Brandon R.C."/>
            <person name="Fine L.D."/>
            <person name="Fritchman J.L."/>
            <person name="Fuhrmann J.L."/>
            <person name="Geoghagen N.S.M."/>
            <person name="Gnehm C.L."/>
            <person name="McDonald L.A."/>
            <person name="Small K.V."/>
            <person name="Fraser C.M."/>
            <person name="Smith H.O."/>
            <person name="Venter J.C."/>
        </authorList>
    </citation>
    <scope>NUCLEOTIDE SEQUENCE [LARGE SCALE GENOMIC DNA]</scope>
    <source>
        <strain>ATCC 51907 / DSM 11121 / KW20 / Rd</strain>
    </source>
</reference>
<reference key="2">
    <citation type="journal article" date="2003" name="Proteins">
        <title>Structure of the YibK methyltransferase from Haemophilus influenzae (HI0766): a cofactor bound at a site formed by a knot.</title>
        <authorList>
            <person name="Lim K."/>
            <person name="Zhang H."/>
            <person name="Tempczyk A."/>
            <person name="Krajewski W."/>
            <person name="Bonander N."/>
            <person name="Toedt J."/>
            <person name="Howard A."/>
            <person name="Eisenstein E."/>
            <person name="Herzberg O."/>
        </authorList>
    </citation>
    <scope>X-RAY CRYSTALLOGRAPHY (1.7 ANGSTROMS) IN COMPLEX WITH S-ADENOSYL-L-METHIONINE</scope>
    <scope>SUBUNIT</scope>
</reference>
<proteinExistence type="evidence at protein level"/>
<comment type="function">
    <text evidence="1">Methylates the ribose at the nucleotide 34 wobble position in the two leucyl isoacceptors tRNA(Leu)(CmAA) and tRNA(Leu)(cmnm5UmAA). Catalyzes the methyl transfer from S-adenosyl-L-methionine to the 2'-OH of the wobble nucleotide.</text>
</comment>
<comment type="catalytic activity">
    <reaction evidence="1">
        <text>cytidine(34) in tRNA + S-adenosyl-L-methionine = 2'-O-methylcytidine(34) in tRNA + S-adenosyl-L-homocysteine + H(+)</text>
        <dbReference type="Rhea" id="RHEA:43084"/>
        <dbReference type="Rhea" id="RHEA-COMP:10331"/>
        <dbReference type="Rhea" id="RHEA-COMP:10332"/>
        <dbReference type="ChEBI" id="CHEBI:15378"/>
        <dbReference type="ChEBI" id="CHEBI:57856"/>
        <dbReference type="ChEBI" id="CHEBI:59789"/>
        <dbReference type="ChEBI" id="CHEBI:74495"/>
        <dbReference type="ChEBI" id="CHEBI:82748"/>
        <dbReference type="EC" id="2.1.1.207"/>
    </reaction>
</comment>
<comment type="catalytic activity">
    <reaction evidence="1">
        <text>5-carboxymethylaminomethyluridine(34) in tRNA(Leu) + S-adenosyl-L-methionine = 5-carboxymethylaminomethyl-2'-O-methyluridine(34) in tRNA(Leu) + S-adenosyl-L-homocysteine + H(+)</text>
        <dbReference type="Rhea" id="RHEA:43088"/>
        <dbReference type="Rhea" id="RHEA-COMP:10333"/>
        <dbReference type="Rhea" id="RHEA-COMP:10334"/>
        <dbReference type="ChEBI" id="CHEBI:15378"/>
        <dbReference type="ChEBI" id="CHEBI:57856"/>
        <dbReference type="ChEBI" id="CHEBI:59789"/>
        <dbReference type="ChEBI" id="CHEBI:74508"/>
        <dbReference type="ChEBI" id="CHEBI:74511"/>
        <dbReference type="EC" id="2.1.1.207"/>
    </reaction>
</comment>
<comment type="subunit">
    <text evidence="1 2">Homodimer.</text>
</comment>
<comment type="interaction">
    <interactant intactId="EBI-15618808">
        <id>P44868</id>
    </interactant>
    <interactant intactId="EBI-15618808">
        <id>P44868</id>
        <label>trmL</label>
    </interactant>
    <organismsDiffer>false</organismsDiffer>
    <experiments>4</experiments>
</comment>
<comment type="subcellular location">
    <subcellularLocation>
        <location evidence="1">Cytoplasm</location>
    </subcellularLocation>
</comment>
<comment type="similarity">
    <text evidence="1">Belongs to the class IV-like SAM-binding methyltransferase superfamily. RNA methyltransferase TrmH family. TrmL subfamily.</text>
</comment>
<protein>
    <recommendedName>
        <fullName evidence="1">tRNA (cytidine(34)-2'-O)-methyltransferase</fullName>
        <ecNumber evidence="1">2.1.1.207</ecNumber>
    </recommendedName>
    <alternativeName>
        <fullName evidence="1">tRNA (cytidine/uridine-2'-O-)-methyltransferase TrmL</fullName>
    </alternativeName>
</protein>
<evidence type="ECO:0000255" key="1">
    <source>
        <dbReference type="HAMAP-Rule" id="MF_01885"/>
    </source>
</evidence>
<evidence type="ECO:0000269" key="2">
    <source>
    </source>
</evidence>
<evidence type="ECO:0007829" key="3">
    <source>
        <dbReference type="PDB" id="1MXI"/>
    </source>
</evidence>
<evidence type="ECO:0007829" key="4">
    <source>
        <dbReference type="PDB" id="6AHW"/>
    </source>
</evidence>
<evidence type="ECO:0007829" key="5">
    <source>
        <dbReference type="PDB" id="7D51"/>
    </source>
</evidence>
<organism>
    <name type="scientific">Haemophilus influenzae (strain ATCC 51907 / DSM 11121 / KW20 / Rd)</name>
    <dbReference type="NCBI Taxonomy" id="71421"/>
    <lineage>
        <taxon>Bacteria</taxon>
        <taxon>Pseudomonadati</taxon>
        <taxon>Pseudomonadota</taxon>
        <taxon>Gammaproteobacteria</taxon>
        <taxon>Pasteurellales</taxon>
        <taxon>Pasteurellaceae</taxon>
        <taxon>Haemophilus</taxon>
    </lineage>
</organism>
<sequence length="160" mass="18401">MLDIVLYEPEIPQNTGNIIRLCANTGFRLHLIEPLGFTWDDKRLRRSGLDYHEFAEIKRHKTFEAFLESEKPKRLFALTTKGCPAHSQVKFKLGDYLMFGPETRGIPMSILNEMPMEQKIRIPMTANSRSMNLSNSVAVTVYEAWRQLGYKGAVNLPEVK</sequence>
<name>TRML_HAEIN</name>
<feature type="chain" id="PRO_0000159819" description="tRNA (cytidine(34)-2'-O)-methyltransferase">
    <location>
        <begin position="1"/>
        <end position="160"/>
    </location>
</feature>
<feature type="binding site" evidence="1 2">
    <location>
        <position position="78"/>
    </location>
    <ligand>
        <name>S-adenosyl-L-methionine</name>
        <dbReference type="ChEBI" id="CHEBI:59789"/>
    </ligand>
</feature>
<feature type="binding site" evidence="1 2">
    <location>
        <position position="100"/>
    </location>
    <ligand>
        <name>S-adenosyl-L-methionine</name>
        <dbReference type="ChEBI" id="CHEBI:59789"/>
    </ligand>
</feature>
<feature type="binding site" evidence="1 2">
    <location>
        <position position="122"/>
    </location>
    <ligand>
        <name>S-adenosyl-L-methionine</name>
        <dbReference type="ChEBI" id="CHEBI:59789"/>
    </ligand>
</feature>
<feature type="binding site" evidence="1 2">
    <location>
        <position position="130"/>
    </location>
    <ligand>
        <name>S-adenosyl-L-methionine</name>
        <dbReference type="ChEBI" id="CHEBI:59789"/>
    </ligand>
</feature>
<feature type="strand" evidence="4">
    <location>
        <begin position="3"/>
        <end position="8"/>
    </location>
</feature>
<feature type="helix" evidence="4">
    <location>
        <begin position="12"/>
        <end position="25"/>
    </location>
</feature>
<feature type="strand" evidence="4">
    <location>
        <begin position="28"/>
        <end position="33"/>
    </location>
</feature>
<feature type="helix" evidence="4">
    <location>
        <begin position="41"/>
        <end position="46"/>
    </location>
</feature>
<feature type="helix" evidence="4">
    <location>
        <begin position="51"/>
        <end position="54"/>
    </location>
</feature>
<feature type="strand" evidence="4">
    <location>
        <begin position="58"/>
        <end position="62"/>
    </location>
</feature>
<feature type="helix" evidence="4">
    <location>
        <begin position="63"/>
        <end position="70"/>
    </location>
</feature>
<feature type="strand" evidence="4">
    <location>
        <begin position="73"/>
        <end position="78"/>
    </location>
</feature>
<feature type="strand" evidence="3">
    <location>
        <begin position="83"/>
        <end position="85"/>
    </location>
</feature>
<feature type="helix" evidence="3">
    <location>
        <begin position="86"/>
        <end position="88"/>
    </location>
</feature>
<feature type="strand" evidence="4">
    <location>
        <begin position="95"/>
        <end position="99"/>
    </location>
</feature>
<feature type="turn" evidence="4">
    <location>
        <begin position="102"/>
        <end position="104"/>
    </location>
</feature>
<feature type="helix" evidence="4">
    <location>
        <begin position="108"/>
        <end position="111"/>
    </location>
</feature>
<feature type="helix" evidence="4">
    <location>
        <begin position="116"/>
        <end position="118"/>
    </location>
</feature>
<feature type="strand" evidence="3">
    <location>
        <begin position="119"/>
        <end position="121"/>
    </location>
</feature>
<feature type="helix" evidence="4">
    <location>
        <begin position="133"/>
        <end position="147"/>
    </location>
</feature>
<feature type="turn" evidence="4">
    <location>
        <begin position="148"/>
        <end position="152"/>
    </location>
</feature>
<feature type="strand" evidence="5">
    <location>
        <begin position="153"/>
        <end position="156"/>
    </location>
</feature>
<keyword id="KW-0002">3D-structure</keyword>
<keyword id="KW-0963">Cytoplasm</keyword>
<keyword id="KW-0489">Methyltransferase</keyword>
<keyword id="KW-1185">Reference proteome</keyword>
<keyword id="KW-0949">S-adenosyl-L-methionine</keyword>
<keyword id="KW-0808">Transferase</keyword>
<keyword id="KW-0819">tRNA processing</keyword>
<gene>
    <name evidence="1" type="primary">trmL</name>
    <name type="ordered locus">HI_0766</name>
</gene>
<dbReference type="EC" id="2.1.1.207" evidence="1"/>
<dbReference type="EMBL" id="L42023">
    <property type="protein sequence ID" value="AAC22424.1"/>
    <property type="molecule type" value="Genomic_DNA"/>
</dbReference>
<dbReference type="PIR" id="E64158">
    <property type="entry name" value="E64158"/>
</dbReference>
<dbReference type="RefSeq" id="NP_438925.1">
    <property type="nucleotide sequence ID" value="NC_000907.1"/>
</dbReference>
<dbReference type="PDB" id="1J85">
    <property type="method" value="X-ray"/>
    <property type="resolution" value="2.00 A"/>
    <property type="chains" value="A=1-160"/>
</dbReference>
<dbReference type="PDB" id="1MXI">
    <property type="method" value="X-ray"/>
    <property type="resolution" value="1.70 A"/>
    <property type="chains" value="A=1-160"/>
</dbReference>
<dbReference type="PDB" id="6AHW">
    <property type="method" value="X-ray"/>
    <property type="resolution" value="1.56 A"/>
    <property type="chains" value="A/B=1-160"/>
</dbReference>
<dbReference type="PDB" id="7D51">
    <property type="method" value="X-ray"/>
    <property type="resolution" value="2.68 A"/>
    <property type="chains" value="A/B=1-160"/>
</dbReference>
<dbReference type="PDBsum" id="1J85"/>
<dbReference type="PDBsum" id="1MXI"/>
<dbReference type="PDBsum" id="6AHW"/>
<dbReference type="PDBsum" id="7D51"/>
<dbReference type="SMR" id="P44868"/>
<dbReference type="DIP" id="DIP-29173N"/>
<dbReference type="STRING" id="71421.HI_0766"/>
<dbReference type="DrugBank" id="DB01752">
    <property type="generic name" value="S-adenosyl-L-homocysteine"/>
</dbReference>
<dbReference type="EnsemblBacteria" id="AAC22424">
    <property type="protein sequence ID" value="AAC22424"/>
    <property type="gene ID" value="HI_0766"/>
</dbReference>
<dbReference type="KEGG" id="hin:HI_0766"/>
<dbReference type="PATRIC" id="fig|71421.8.peg.805"/>
<dbReference type="eggNOG" id="COG0219">
    <property type="taxonomic scope" value="Bacteria"/>
</dbReference>
<dbReference type="HOGENOM" id="CLU_110125_1_0_6"/>
<dbReference type="OrthoDB" id="9789043at2"/>
<dbReference type="PhylomeDB" id="P44868"/>
<dbReference type="BioCyc" id="HINF71421:G1GJ1-806-MONOMER"/>
<dbReference type="EvolutionaryTrace" id="P44868"/>
<dbReference type="Proteomes" id="UP000000579">
    <property type="component" value="Chromosome"/>
</dbReference>
<dbReference type="GO" id="GO:0005737">
    <property type="term" value="C:cytoplasm"/>
    <property type="evidence" value="ECO:0007669"/>
    <property type="project" value="UniProtKB-SubCell"/>
</dbReference>
<dbReference type="GO" id="GO:0042802">
    <property type="term" value="F:identical protein binding"/>
    <property type="evidence" value="ECO:0000353"/>
    <property type="project" value="IntAct"/>
</dbReference>
<dbReference type="GO" id="GO:0003723">
    <property type="term" value="F:RNA binding"/>
    <property type="evidence" value="ECO:0007669"/>
    <property type="project" value="InterPro"/>
</dbReference>
<dbReference type="GO" id="GO:0141102">
    <property type="term" value="F:tRNA (5-carboxymethylaminomethyluridine(34)-2'-O)-methyltransferase activity"/>
    <property type="evidence" value="ECO:0007669"/>
    <property type="project" value="RHEA"/>
</dbReference>
<dbReference type="GO" id="GO:0141098">
    <property type="term" value="F:tRNA (cytidine(34)-2'-O)-methyltransferase activity"/>
    <property type="evidence" value="ECO:0007669"/>
    <property type="project" value="RHEA"/>
</dbReference>
<dbReference type="GO" id="GO:0002131">
    <property type="term" value="P:wobble position cytosine ribose methylation"/>
    <property type="evidence" value="ECO:0000318"/>
    <property type="project" value="GO_Central"/>
</dbReference>
<dbReference type="GO" id="GO:0002132">
    <property type="term" value="P:wobble position uridine ribose methylation"/>
    <property type="evidence" value="ECO:0000318"/>
    <property type="project" value="GO_Central"/>
</dbReference>
<dbReference type="CDD" id="cd18094">
    <property type="entry name" value="SpoU-like_TrmL"/>
    <property type="match status" value="1"/>
</dbReference>
<dbReference type="FunFam" id="3.40.1280.10:FF:000002">
    <property type="entry name" value="Peptidylprolyl isomerase"/>
    <property type="match status" value="1"/>
</dbReference>
<dbReference type="Gene3D" id="3.40.1280.10">
    <property type="match status" value="1"/>
</dbReference>
<dbReference type="HAMAP" id="MF_01885">
    <property type="entry name" value="tRNA_methyltr_TrmL"/>
    <property type="match status" value="1"/>
</dbReference>
<dbReference type="InterPro" id="IPR029028">
    <property type="entry name" value="Alpha/beta_knot_MTases"/>
</dbReference>
<dbReference type="InterPro" id="IPR001537">
    <property type="entry name" value="SpoU_MeTrfase"/>
</dbReference>
<dbReference type="InterPro" id="IPR016914">
    <property type="entry name" value="TrmL"/>
</dbReference>
<dbReference type="InterPro" id="IPR029026">
    <property type="entry name" value="tRNA_m1G_MTases_N"/>
</dbReference>
<dbReference type="NCBIfam" id="NF007683">
    <property type="entry name" value="PRK10358.1"/>
    <property type="match status" value="1"/>
</dbReference>
<dbReference type="NCBIfam" id="TIGR00185">
    <property type="entry name" value="tRNA_yibK_trmL"/>
    <property type="match status" value="1"/>
</dbReference>
<dbReference type="PANTHER" id="PTHR42971">
    <property type="entry name" value="TRNA (CYTIDINE(34)-2'-O)-METHYLTRANSFERASE"/>
    <property type="match status" value="1"/>
</dbReference>
<dbReference type="PANTHER" id="PTHR42971:SF1">
    <property type="entry name" value="TRNA (CYTIDINE(34)-2'-O)-METHYLTRANSFERASE"/>
    <property type="match status" value="1"/>
</dbReference>
<dbReference type="Pfam" id="PF00588">
    <property type="entry name" value="SpoU_methylase"/>
    <property type="match status" value="1"/>
</dbReference>
<dbReference type="PIRSF" id="PIRSF029256">
    <property type="entry name" value="SpoU_TrmH_prd"/>
    <property type="match status" value="1"/>
</dbReference>
<dbReference type="SUPFAM" id="SSF75217">
    <property type="entry name" value="alpha/beta knot"/>
    <property type="match status" value="1"/>
</dbReference>
<accession>P44868</accession>